<accession>P49361</accession>
<proteinExistence type="evidence at transcript level"/>
<sequence length="1037" mass="113032">MERARRLANKAILGRLVSQTKHNPSISSPALCSPSRYVSSLSPYVCSGTNVRSDRNLNGFGSQVRTISVEALKPSDTFPRRHNSATPEEQTKMAEFVGFPNLDSLIDATVPKSIRLDSMKYSKFDEGLTESQMIAHMQDLASKNKIFKSFIGMGYYNTSVPTVILRNIMENPGWYTQYTPYQAEIAQGRLESLLNFQTMVTDLTGLPMSNASLLDEGTAAAEAMAMCNNIQKGKKKTFIIASNCHPQTIDICKTRADGFDLKVVTSDLKDFDYSSGDVCGVLVQYPGTEGELLDYSEFIKNAHANGVKVVMASDLLALTILKPPGELGADIVVGSAQRFGVPMGYGGPHAAFLATSQEYKRMMPGRIIGVSVDSSGKPALRMAMQTREQHIRRDKATSNICTAQALLANMAAMFGVYHGPEGLKTIAKRVHGLAGTFAAGLKKLGTVQVQDLPFFDTVKVTCVDSKAIAEEAYKHKMNLRIVDKNTITVAFDETTTIEDVDTLFKVFALGKPVTFTAASIAPEVQDAIPSGLVRETPYLTHPIFNMYHTEHELLRYISKLQSKDLSLCHSMIPLGSCTMKLNATTEMMPVTWPAFADIHPFAPTEQAQGYQEMFKNLGDLLCTITGFDSFSLQPNAGAAGEYAGLMVIRAYHMARGDHHRNVCIIPVSAHGTNPASAAMCGMKIITVGTDSKGNINIEELRKAAEANKENLSALMVTYPSTHGVYEEGIDEICKIIHDNGGQVYMDGANMNAQVGLTSPGWIGADVCHLNLHKTFCIPHGGGGPGMGPIGVKKHLAPYLPSHPVVATGGIPAPEQSQPLGTIAAAPWGSALILPISYTYIAMMGSQGITNASKIAILNANYMAKRLENHYPILFRGVNGTVAHEFIVDLRPLKTTAGIEPEDVAKRLIDYGFHGPTMSWPVPGTLMIEPTESESKAELDRFCDALISIRQEIAEIEKGNVDLNNNVIKGAPHPPQLLMADKWTKPYSREYAAYPAPWLRAAKFWPTTCRVDNVYGDRNLICTLQPPQEYEEKAEATA</sequence>
<reference key="1">
    <citation type="journal article" date="1995" name="Plant Physiol.">
        <title>The gdcsPA gene from Flaveria pringlei (Asteraceae).</title>
        <authorList>
            <person name="Bauwe H."/>
            <person name="Kopriva S."/>
        </authorList>
    </citation>
    <scope>NUCLEOTIDE SEQUENCE [GENOMIC DNA]</scope>
    <source>
        <tissue>Leaf</tissue>
    </source>
</reference>
<reference key="2">
    <citation type="journal article" date="1994" name="Plant Physiol.">
        <title>P-protein of glycine decarboxylase from Flaveria pringlei.</title>
        <authorList>
            <person name="Kopriva S."/>
            <person name="Bauwe H."/>
        </authorList>
    </citation>
    <scope>NUCLEOTIDE SEQUENCE [MRNA]</scope>
    <source>
        <tissue>Leaf</tissue>
    </source>
</reference>
<reference key="3">
    <citation type="journal article" date="1995" name="Eur. J. Biochem.">
        <title>Structure and expression analysis of the gdcsPA and gdcsPB genes encoding two P-isoproteins of the glycine-cleavage system from Flaveria pringlei.</title>
        <authorList>
            <person name="Bauwe H."/>
            <person name="Chu C.-C."/>
            <person name="Kopriva S."/>
            <person name="Nan Q."/>
        </authorList>
    </citation>
    <scope>NUCLEOTIDE SEQUENCE [GENOMIC DNA]</scope>
    <scope>TISSUE SPECIFICITY</scope>
    <source>
        <tissue>Leaf</tissue>
    </source>
</reference>
<feature type="transit peptide" description="Mitochondrion" evidence="2">
    <location>
        <begin position="1"/>
        <end position="66"/>
    </location>
</feature>
<feature type="chain" id="PRO_0000010746" description="Glycine dehydrogenase (decarboxylating) A, mitochondrial">
    <location>
        <begin position="67"/>
        <end position="1037"/>
    </location>
</feature>
<feature type="modified residue" description="N6-(pyridoxal phosphate)lysine" evidence="1">
    <location>
        <position position="773"/>
    </location>
</feature>
<feature type="sequence conflict" description="In Ref. 2; CAA81076." evidence="4" ref="2">
    <original>E</original>
    <variation>D</variation>
    <location>
        <position position="2"/>
    </location>
</feature>
<feature type="sequence conflict" description="In Ref. 2; CAA81076." evidence="4" ref="2">
    <original>T</original>
    <variation>I</variation>
    <location>
        <position position="495"/>
    </location>
</feature>
<name>GCSPA_FLAPR</name>
<protein>
    <recommendedName>
        <fullName>Glycine dehydrogenase (decarboxylating) A, mitochondrial</fullName>
        <ecNumber>1.4.4.2</ecNumber>
    </recommendedName>
    <alternativeName>
        <fullName>Glycine cleavage system P protein A</fullName>
    </alternativeName>
    <alternativeName>
        <fullName>Glycine decarboxylase A</fullName>
    </alternativeName>
    <alternativeName>
        <fullName>Glycine dehydrogenase (aminomethyl-transferring) A</fullName>
    </alternativeName>
</protein>
<gene>
    <name type="primary">GDCSPA</name>
</gene>
<organism>
    <name type="scientific">Flaveria pringlei</name>
    <dbReference type="NCBI Taxonomy" id="4226"/>
    <lineage>
        <taxon>Eukaryota</taxon>
        <taxon>Viridiplantae</taxon>
        <taxon>Streptophyta</taxon>
        <taxon>Embryophyta</taxon>
        <taxon>Tracheophyta</taxon>
        <taxon>Spermatophyta</taxon>
        <taxon>Magnoliopsida</taxon>
        <taxon>eudicotyledons</taxon>
        <taxon>Gunneridae</taxon>
        <taxon>Pentapetalae</taxon>
        <taxon>asterids</taxon>
        <taxon>campanulids</taxon>
        <taxon>Asterales</taxon>
        <taxon>Asteraceae</taxon>
        <taxon>Asteroideae</taxon>
        <taxon>Heliantheae alliance</taxon>
        <taxon>Tageteae</taxon>
        <taxon>Flaveria</taxon>
    </lineage>
</organism>
<comment type="function">
    <text>The glycine cleavage system catalyzes the degradation of glycine. The P protein binds the alpha-amino group of glycine through its pyridoxal phosphate cofactor; CO(2) is released and the remaining methylamine moiety is then transferred to the lipoamide cofactor of the H protein.</text>
</comment>
<comment type="catalytic activity">
    <reaction>
        <text>N(6)-[(R)-lipoyl]-L-lysyl-[glycine-cleavage complex H protein] + glycine + H(+) = N(6)-[(R)-S(8)-aminomethyldihydrolipoyl]-L-lysyl-[glycine-cleavage complex H protein] + CO2</text>
        <dbReference type="Rhea" id="RHEA:24304"/>
        <dbReference type="Rhea" id="RHEA-COMP:10494"/>
        <dbReference type="Rhea" id="RHEA-COMP:10495"/>
        <dbReference type="ChEBI" id="CHEBI:15378"/>
        <dbReference type="ChEBI" id="CHEBI:16526"/>
        <dbReference type="ChEBI" id="CHEBI:57305"/>
        <dbReference type="ChEBI" id="CHEBI:83099"/>
        <dbReference type="ChEBI" id="CHEBI:83143"/>
        <dbReference type="EC" id="1.4.4.2"/>
    </reaction>
</comment>
<comment type="cofactor">
    <cofactor>
        <name>pyridoxal 5'-phosphate</name>
        <dbReference type="ChEBI" id="CHEBI:597326"/>
    </cofactor>
</comment>
<comment type="subunit">
    <text evidence="1">Homodimer (By similarity). The glycine cleavage system is composed of four proteins: P, T, L and H.</text>
</comment>
<comment type="subcellular location">
    <subcellularLocation>
        <location>Mitochondrion</location>
    </subcellularLocation>
</comment>
<comment type="tissue specificity">
    <text evidence="3">Expressed in leaves, stems and roots.</text>
</comment>
<comment type="similarity">
    <text evidence="4">Belongs to the GcvP family.</text>
</comment>
<dbReference type="EC" id="1.4.4.2"/>
<dbReference type="EMBL" id="Z36879">
    <property type="protein sequence ID" value="CAA85353.1"/>
    <property type="molecule type" value="Genomic_DNA"/>
</dbReference>
<dbReference type="EMBL" id="Z25857">
    <property type="protein sequence ID" value="CAA81076.1"/>
    <property type="molecule type" value="mRNA"/>
</dbReference>
<dbReference type="PIR" id="S63535">
    <property type="entry name" value="S63535"/>
</dbReference>
<dbReference type="SMR" id="P49361"/>
<dbReference type="GO" id="GO:0048046">
    <property type="term" value="C:apoplast"/>
    <property type="evidence" value="ECO:0007669"/>
    <property type="project" value="TreeGrafter"/>
</dbReference>
<dbReference type="GO" id="GO:0009941">
    <property type="term" value="C:chloroplast envelope"/>
    <property type="evidence" value="ECO:0007669"/>
    <property type="project" value="TreeGrafter"/>
</dbReference>
<dbReference type="GO" id="GO:0005960">
    <property type="term" value="C:glycine cleavage complex"/>
    <property type="evidence" value="ECO:0007669"/>
    <property type="project" value="TreeGrafter"/>
</dbReference>
<dbReference type="GO" id="GO:0005739">
    <property type="term" value="C:mitochondrion"/>
    <property type="evidence" value="ECO:0007669"/>
    <property type="project" value="UniProtKB-SubCell"/>
</dbReference>
<dbReference type="GO" id="GO:0016594">
    <property type="term" value="F:glycine binding"/>
    <property type="evidence" value="ECO:0007669"/>
    <property type="project" value="TreeGrafter"/>
</dbReference>
<dbReference type="GO" id="GO:0004375">
    <property type="term" value="F:glycine dehydrogenase (decarboxylating) activity"/>
    <property type="evidence" value="ECO:0007669"/>
    <property type="project" value="UniProtKB-EC"/>
</dbReference>
<dbReference type="GO" id="GO:0030170">
    <property type="term" value="F:pyridoxal phosphate binding"/>
    <property type="evidence" value="ECO:0007669"/>
    <property type="project" value="TreeGrafter"/>
</dbReference>
<dbReference type="GO" id="GO:0019464">
    <property type="term" value="P:glycine decarboxylation via glycine cleavage system"/>
    <property type="evidence" value="ECO:0007669"/>
    <property type="project" value="TreeGrafter"/>
</dbReference>
<dbReference type="CDD" id="cd00613">
    <property type="entry name" value="GDC-P"/>
    <property type="match status" value="2"/>
</dbReference>
<dbReference type="FunFam" id="3.90.1150.10:FF:000025">
    <property type="entry name" value="Glycine cleavage system P protein"/>
    <property type="match status" value="1"/>
</dbReference>
<dbReference type="FunFam" id="3.40.640.10:FF:000005">
    <property type="entry name" value="Glycine dehydrogenase (decarboxylating), mitochondrial"/>
    <property type="match status" value="1"/>
</dbReference>
<dbReference type="FunFam" id="3.90.1150.10:FF:000007">
    <property type="entry name" value="Glycine dehydrogenase (decarboxylating), mitochondrial"/>
    <property type="match status" value="1"/>
</dbReference>
<dbReference type="FunFam" id="3.40.640.10:FF:000007">
    <property type="entry name" value="glycine dehydrogenase (Decarboxylating), mitochondrial"/>
    <property type="match status" value="1"/>
</dbReference>
<dbReference type="Gene3D" id="3.90.1150.10">
    <property type="entry name" value="Aspartate Aminotransferase, domain 1"/>
    <property type="match status" value="2"/>
</dbReference>
<dbReference type="Gene3D" id="3.40.640.10">
    <property type="entry name" value="Type I PLP-dependent aspartate aminotransferase-like (Major domain)"/>
    <property type="match status" value="2"/>
</dbReference>
<dbReference type="HAMAP" id="MF_00711">
    <property type="entry name" value="GcvP"/>
    <property type="match status" value="1"/>
</dbReference>
<dbReference type="InterPro" id="IPR003437">
    <property type="entry name" value="GcvP"/>
</dbReference>
<dbReference type="InterPro" id="IPR049316">
    <property type="entry name" value="GDC-P_C"/>
</dbReference>
<dbReference type="InterPro" id="IPR049315">
    <property type="entry name" value="GDC-P_N"/>
</dbReference>
<dbReference type="InterPro" id="IPR020581">
    <property type="entry name" value="GDC_P"/>
</dbReference>
<dbReference type="InterPro" id="IPR015424">
    <property type="entry name" value="PyrdxlP-dep_Trfase"/>
</dbReference>
<dbReference type="InterPro" id="IPR015421">
    <property type="entry name" value="PyrdxlP-dep_Trfase_major"/>
</dbReference>
<dbReference type="InterPro" id="IPR015422">
    <property type="entry name" value="PyrdxlP-dep_Trfase_small"/>
</dbReference>
<dbReference type="NCBIfam" id="TIGR00461">
    <property type="entry name" value="gcvP"/>
    <property type="match status" value="1"/>
</dbReference>
<dbReference type="NCBIfam" id="NF003346">
    <property type="entry name" value="PRK04366.1"/>
    <property type="match status" value="1"/>
</dbReference>
<dbReference type="PANTHER" id="PTHR11773:SF12">
    <property type="entry name" value="GLYCINE CLEAVAGE SYSTEM P PROTEIN"/>
    <property type="match status" value="1"/>
</dbReference>
<dbReference type="PANTHER" id="PTHR11773">
    <property type="entry name" value="GLYCINE DEHYDROGENASE, DECARBOXYLATING"/>
    <property type="match status" value="1"/>
</dbReference>
<dbReference type="Pfam" id="PF21478">
    <property type="entry name" value="GcvP2_C"/>
    <property type="match status" value="1"/>
</dbReference>
<dbReference type="Pfam" id="PF02347">
    <property type="entry name" value="GDC-P"/>
    <property type="match status" value="2"/>
</dbReference>
<dbReference type="SUPFAM" id="SSF53383">
    <property type="entry name" value="PLP-dependent transferases"/>
    <property type="match status" value="2"/>
</dbReference>
<evidence type="ECO:0000250" key="1"/>
<evidence type="ECO:0000255" key="2"/>
<evidence type="ECO:0000269" key="3">
    <source>
    </source>
</evidence>
<evidence type="ECO:0000305" key="4"/>
<keyword id="KW-0496">Mitochondrion</keyword>
<keyword id="KW-0560">Oxidoreductase</keyword>
<keyword id="KW-0663">Pyridoxal phosphate</keyword>
<keyword id="KW-0809">Transit peptide</keyword>